<gene>
    <name type="primary">IWS1</name>
    <name type="ordered locus">YALI0A20724g</name>
</gene>
<sequence>MSDTEKPIKSEEPVDEGVDRVDEEENVEEPAEDVGEAAEEASEAPEEAPAEAATTTEAAPADDDEDDSDLSDLDEDEIKNAAIEDDDDDYNKLSAHRRKVQSSGKKTLKKRATKDSRAADDDEDEIDHSHIDLDPSMARRREIEARIDAAMKPASQRRKKLGEDDIEMMQDERISNLREKMRNAAIADAESNREGQPATHKLQLLPEVKDVLQKHHLADSILDNNLLEAVRIWLEPLPDASLPSYSIQEELFDALVRLPIKSIHLRESGLGKVVTFYRKSKQPQLRIKRIADKLVADWTRPIMGRSDNYREKVVSTRSFDPSTQEIALAVAAKRAQTLKDGTLAEKQAERRRRAHIPSAQPANYRVAPKSEIIPQNRGGSTNDMTFKRLKGKLGVTKTGKKKSGVSIEGRGLNG</sequence>
<accession>Q6CGB2</accession>
<feature type="chain" id="PRO_0000083365" description="Transcription factor IWS1">
    <location>
        <begin position="1"/>
        <end position="414"/>
    </location>
</feature>
<feature type="domain" description="TFIIS N-terminal" evidence="2">
    <location>
        <begin position="228"/>
        <end position="305"/>
    </location>
</feature>
<feature type="region of interest" description="Disordered" evidence="3">
    <location>
        <begin position="1"/>
        <end position="138"/>
    </location>
</feature>
<feature type="region of interest" description="Disordered" evidence="3">
    <location>
        <begin position="395"/>
        <end position="414"/>
    </location>
</feature>
<feature type="compositionally biased region" description="Basic and acidic residues" evidence="3">
    <location>
        <begin position="1"/>
        <end position="20"/>
    </location>
</feature>
<feature type="compositionally biased region" description="Acidic residues" evidence="3">
    <location>
        <begin position="21"/>
        <end position="49"/>
    </location>
</feature>
<feature type="compositionally biased region" description="Low complexity" evidence="3">
    <location>
        <begin position="50"/>
        <end position="59"/>
    </location>
</feature>
<feature type="compositionally biased region" description="Acidic residues" evidence="3">
    <location>
        <begin position="60"/>
        <end position="89"/>
    </location>
</feature>
<feature type="compositionally biased region" description="Basic residues" evidence="3">
    <location>
        <begin position="94"/>
        <end position="112"/>
    </location>
</feature>
<feature type="compositionally biased region" description="Basic and acidic residues" evidence="3">
    <location>
        <begin position="127"/>
        <end position="138"/>
    </location>
</feature>
<dbReference type="EMBL" id="CR382127">
    <property type="protein sequence ID" value="CAG84238.1"/>
    <property type="molecule type" value="Genomic_DNA"/>
</dbReference>
<dbReference type="RefSeq" id="XP_500300.1">
    <property type="nucleotide sequence ID" value="XM_500300.1"/>
</dbReference>
<dbReference type="SMR" id="Q6CGB2"/>
<dbReference type="FunCoup" id="Q6CGB2">
    <property type="interactions" value="358"/>
</dbReference>
<dbReference type="STRING" id="284591.Q6CGB2"/>
<dbReference type="EnsemblFungi" id="CAG84238">
    <property type="protein sequence ID" value="CAG84238"/>
    <property type="gene ID" value="YALI0_A20724g"/>
</dbReference>
<dbReference type="KEGG" id="yli:2905784"/>
<dbReference type="VEuPathDB" id="FungiDB:YALI0_A20724g"/>
<dbReference type="HOGENOM" id="CLU_045275_0_0_1"/>
<dbReference type="InParanoid" id="Q6CGB2"/>
<dbReference type="OMA" id="MPAYNIQ"/>
<dbReference type="OrthoDB" id="121414at4891"/>
<dbReference type="Proteomes" id="UP000001300">
    <property type="component" value="Chromosome A"/>
</dbReference>
<dbReference type="GO" id="GO:0005634">
    <property type="term" value="C:nucleus"/>
    <property type="evidence" value="ECO:0000318"/>
    <property type="project" value="GO_Central"/>
</dbReference>
<dbReference type="GO" id="GO:0016973">
    <property type="term" value="P:poly(A)+ mRNA export from nucleus"/>
    <property type="evidence" value="ECO:0000318"/>
    <property type="project" value="GO_Central"/>
</dbReference>
<dbReference type="FunFam" id="1.20.930.10:FF:000003">
    <property type="entry name" value="Putative Transcription factor IWS1"/>
    <property type="match status" value="1"/>
</dbReference>
<dbReference type="Gene3D" id="1.20.930.10">
    <property type="entry name" value="Conserved domain common to transcription factors TFIIS, elongin A, CRSP70"/>
    <property type="match status" value="1"/>
</dbReference>
<dbReference type="InterPro" id="IPR051037">
    <property type="entry name" value="RNAPII_TF_IWS1"/>
</dbReference>
<dbReference type="InterPro" id="IPR035441">
    <property type="entry name" value="TFIIS/LEDGF_dom_sf"/>
</dbReference>
<dbReference type="InterPro" id="IPR017923">
    <property type="entry name" value="TFIIS_N"/>
</dbReference>
<dbReference type="PANTHER" id="PTHR46010">
    <property type="entry name" value="PROTEIN IWS1 HOMOLOG"/>
    <property type="match status" value="1"/>
</dbReference>
<dbReference type="PANTHER" id="PTHR46010:SF1">
    <property type="entry name" value="PROTEIN IWS1 HOMOLOG"/>
    <property type="match status" value="1"/>
</dbReference>
<dbReference type="Pfam" id="PF08711">
    <property type="entry name" value="Med26"/>
    <property type="match status" value="1"/>
</dbReference>
<dbReference type="PROSITE" id="PS51319">
    <property type="entry name" value="TFIIS_N"/>
    <property type="match status" value="1"/>
</dbReference>
<reference key="1">
    <citation type="journal article" date="2004" name="Nature">
        <title>Genome evolution in yeasts.</title>
        <authorList>
            <person name="Dujon B."/>
            <person name="Sherman D."/>
            <person name="Fischer G."/>
            <person name="Durrens P."/>
            <person name="Casaregola S."/>
            <person name="Lafontaine I."/>
            <person name="de Montigny J."/>
            <person name="Marck C."/>
            <person name="Neuveglise C."/>
            <person name="Talla E."/>
            <person name="Goffard N."/>
            <person name="Frangeul L."/>
            <person name="Aigle M."/>
            <person name="Anthouard V."/>
            <person name="Babour A."/>
            <person name="Barbe V."/>
            <person name="Barnay S."/>
            <person name="Blanchin S."/>
            <person name="Beckerich J.-M."/>
            <person name="Beyne E."/>
            <person name="Bleykasten C."/>
            <person name="Boisrame A."/>
            <person name="Boyer J."/>
            <person name="Cattolico L."/>
            <person name="Confanioleri F."/>
            <person name="de Daruvar A."/>
            <person name="Despons L."/>
            <person name="Fabre E."/>
            <person name="Fairhead C."/>
            <person name="Ferry-Dumazet H."/>
            <person name="Groppi A."/>
            <person name="Hantraye F."/>
            <person name="Hennequin C."/>
            <person name="Jauniaux N."/>
            <person name="Joyet P."/>
            <person name="Kachouri R."/>
            <person name="Kerrest A."/>
            <person name="Koszul R."/>
            <person name="Lemaire M."/>
            <person name="Lesur I."/>
            <person name="Ma L."/>
            <person name="Muller H."/>
            <person name="Nicaud J.-M."/>
            <person name="Nikolski M."/>
            <person name="Oztas S."/>
            <person name="Ozier-Kalogeropoulos O."/>
            <person name="Pellenz S."/>
            <person name="Potier S."/>
            <person name="Richard G.-F."/>
            <person name="Straub M.-L."/>
            <person name="Suleau A."/>
            <person name="Swennen D."/>
            <person name="Tekaia F."/>
            <person name="Wesolowski-Louvel M."/>
            <person name="Westhof E."/>
            <person name="Wirth B."/>
            <person name="Zeniou-Meyer M."/>
            <person name="Zivanovic Y."/>
            <person name="Bolotin-Fukuhara M."/>
            <person name="Thierry A."/>
            <person name="Bouchier C."/>
            <person name="Caudron B."/>
            <person name="Scarpelli C."/>
            <person name="Gaillardin C."/>
            <person name="Weissenbach J."/>
            <person name="Wincker P."/>
            <person name="Souciet J.-L."/>
        </authorList>
    </citation>
    <scope>NUCLEOTIDE SEQUENCE [LARGE SCALE GENOMIC DNA]</scope>
    <source>
        <strain>CLIB 122 / E 150</strain>
    </source>
</reference>
<keyword id="KW-0539">Nucleus</keyword>
<keyword id="KW-1185">Reference proteome</keyword>
<keyword id="KW-0804">Transcription</keyword>
<keyword id="KW-0805">Transcription regulation</keyword>
<comment type="function">
    <text evidence="1">Transcription factor involved in RNA polymerase II transcription regulation. May function in both SPT15/TBP post-recruitment and recruitment steps of transcription (By similarity).</text>
</comment>
<comment type="subcellular location">
    <subcellularLocation>
        <location evidence="2">Nucleus</location>
    </subcellularLocation>
</comment>
<comment type="similarity">
    <text evidence="4">Belongs to the IWS1 family.</text>
</comment>
<protein>
    <recommendedName>
        <fullName>Transcription factor IWS1</fullName>
    </recommendedName>
</protein>
<proteinExistence type="inferred from homology"/>
<evidence type="ECO:0000250" key="1"/>
<evidence type="ECO:0000255" key="2">
    <source>
        <dbReference type="PROSITE-ProRule" id="PRU00649"/>
    </source>
</evidence>
<evidence type="ECO:0000256" key="3">
    <source>
        <dbReference type="SAM" id="MobiDB-lite"/>
    </source>
</evidence>
<evidence type="ECO:0000305" key="4"/>
<name>IWS1_YARLI</name>
<organism>
    <name type="scientific">Yarrowia lipolytica (strain CLIB 122 / E 150)</name>
    <name type="common">Yeast</name>
    <name type="synonym">Candida lipolytica</name>
    <dbReference type="NCBI Taxonomy" id="284591"/>
    <lineage>
        <taxon>Eukaryota</taxon>
        <taxon>Fungi</taxon>
        <taxon>Dikarya</taxon>
        <taxon>Ascomycota</taxon>
        <taxon>Saccharomycotina</taxon>
        <taxon>Dipodascomycetes</taxon>
        <taxon>Dipodascales</taxon>
        <taxon>Dipodascales incertae sedis</taxon>
        <taxon>Yarrowia</taxon>
    </lineage>
</organism>